<keyword id="KW-0030">Aminoacyl-tRNA synthetase</keyword>
<keyword id="KW-0067">ATP-binding</keyword>
<keyword id="KW-0963">Cytoplasm</keyword>
<keyword id="KW-0436">Ligase</keyword>
<keyword id="KW-0547">Nucleotide-binding</keyword>
<keyword id="KW-0648">Protein biosynthesis</keyword>
<dbReference type="EC" id="6.1.1.15" evidence="1"/>
<dbReference type="EMBL" id="AM236080">
    <property type="protein sequence ID" value="CAK07214.1"/>
    <property type="molecule type" value="Genomic_DNA"/>
</dbReference>
<dbReference type="RefSeq" id="WP_011651381.1">
    <property type="nucleotide sequence ID" value="NC_008380.1"/>
</dbReference>
<dbReference type="SMR" id="Q1MIJ6"/>
<dbReference type="EnsemblBacteria" id="CAK07214">
    <property type="protein sequence ID" value="CAK07214"/>
    <property type="gene ID" value="RL1719"/>
</dbReference>
<dbReference type="KEGG" id="rle:RL1719"/>
<dbReference type="eggNOG" id="COG0442">
    <property type="taxonomic scope" value="Bacteria"/>
</dbReference>
<dbReference type="HOGENOM" id="CLU_016739_4_2_5"/>
<dbReference type="Proteomes" id="UP000006575">
    <property type="component" value="Chromosome"/>
</dbReference>
<dbReference type="GO" id="GO:0005829">
    <property type="term" value="C:cytosol"/>
    <property type="evidence" value="ECO:0007669"/>
    <property type="project" value="TreeGrafter"/>
</dbReference>
<dbReference type="GO" id="GO:0005524">
    <property type="term" value="F:ATP binding"/>
    <property type="evidence" value="ECO:0007669"/>
    <property type="project" value="UniProtKB-UniRule"/>
</dbReference>
<dbReference type="GO" id="GO:0004827">
    <property type="term" value="F:proline-tRNA ligase activity"/>
    <property type="evidence" value="ECO:0007669"/>
    <property type="project" value="UniProtKB-UniRule"/>
</dbReference>
<dbReference type="GO" id="GO:0006433">
    <property type="term" value="P:prolyl-tRNA aminoacylation"/>
    <property type="evidence" value="ECO:0007669"/>
    <property type="project" value="UniProtKB-UniRule"/>
</dbReference>
<dbReference type="CDD" id="cd00861">
    <property type="entry name" value="ProRS_anticodon_short"/>
    <property type="match status" value="1"/>
</dbReference>
<dbReference type="CDD" id="cd00779">
    <property type="entry name" value="ProRS_core_prok"/>
    <property type="match status" value="1"/>
</dbReference>
<dbReference type="FunFam" id="3.30.930.10:FF:000042">
    <property type="entry name" value="probable proline--tRNA ligase, mitochondrial"/>
    <property type="match status" value="1"/>
</dbReference>
<dbReference type="FunFam" id="3.40.50.800:FF:000032">
    <property type="entry name" value="Proline--tRNA ligase"/>
    <property type="match status" value="1"/>
</dbReference>
<dbReference type="Gene3D" id="3.40.50.800">
    <property type="entry name" value="Anticodon-binding domain"/>
    <property type="match status" value="1"/>
</dbReference>
<dbReference type="Gene3D" id="3.30.930.10">
    <property type="entry name" value="Bira Bifunctional Protein, Domain 2"/>
    <property type="match status" value="1"/>
</dbReference>
<dbReference type="HAMAP" id="MF_01570">
    <property type="entry name" value="Pro_tRNA_synth_type2"/>
    <property type="match status" value="1"/>
</dbReference>
<dbReference type="InterPro" id="IPR002314">
    <property type="entry name" value="aa-tRNA-synt_IIb"/>
</dbReference>
<dbReference type="InterPro" id="IPR006195">
    <property type="entry name" value="aa-tRNA-synth_II"/>
</dbReference>
<dbReference type="InterPro" id="IPR045864">
    <property type="entry name" value="aa-tRNA-synth_II/BPL/LPL"/>
</dbReference>
<dbReference type="InterPro" id="IPR004154">
    <property type="entry name" value="Anticodon-bd"/>
</dbReference>
<dbReference type="InterPro" id="IPR036621">
    <property type="entry name" value="Anticodon-bd_dom_sf"/>
</dbReference>
<dbReference type="InterPro" id="IPR002316">
    <property type="entry name" value="Pro-tRNA-ligase_IIa"/>
</dbReference>
<dbReference type="InterPro" id="IPR004500">
    <property type="entry name" value="Pro-tRNA-synth_IIa_bac-type"/>
</dbReference>
<dbReference type="InterPro" id="IPR050062">
    <property type="entry name" value="Pro-tRNA_synthetase"/>
</dbReference>
<dbReference type="InterPro" id="IPR023716">
    <property type="entry name" value="Prolyl-tRNA_ligase_IIa_type2"/>
</dbReference>
<dbReference type="InterPro" id="IPR044140">
    <property type="entry name" value="ProRS_anticodon_short"/>
</dbReference>
<dbReference type="InterPro" id="IPR033730">
    <property type="entry name" value="ProRS_core_prok"/>
</dbReference>
<dbReference type="NCBIfam" id="NF008979">
    <property type="entry name" value="PRK12325.1"/>
    <property type="match status" value="1"/>
</dbReference>
<dbReference type="NCBIfam" id="TIGR00409">
    <property type="entry name" value="proS_fam_II"/>
    <property type="match status" value="1"/>
</dbReference>
<dbReference type="PANTHER" id="PTHR42753">
    <property type="entry name" value="MITOCHONDRIAL RIBOSOME PROTEIN L39/PROLYL-TRNA LIGASE FAMILY MEMBER"/>
    <property type="match status" value="1"/>
</dbReference>
<dbReference type="PANTHER" id="PTHR42753:SF2">
    <property type="entry name" value="PROLINE--TRNA LIGASE"/>
    <property type="match status" value="1"/>
</dbReference>
<dbReference type="Pfam" id="PF03129">
    <property type="entry name" value="HGTP_anticodon"/>
    <property type="match status" value="1"/>
</dbReference>
<dbReference type="Pfam" id="PF00587">
    <property type="entry name" value="tRNA-synt_2b"/>
    <property type="match status" value="1"/>
</dbReference>
<dbReference type="PRINTS" id="PR01046">
    <property type="entry name" value="TRNASYNTHPRO"/>
</dbReference>
<dbReference type="SUPFAM" id="SSF52954">
    <property type="entry name" value="Class II aaRS ABD-related"/>
    <property type="match status" value="1"/>
</dbReference>
<dbReference type="SUPFAM" id="SSF55681">
    <property type="entry name" value="Class II aaRS and biotin synthetases"/>
    <property type="match status" value="1"/>
</dbReference>
<dbReference type="PROSITE" id="PS50862">
    <property type="entry name" value="AA_TRNA_LIGASE_II"/>
    <property type="match status" value="1"/>
</dbReference>
<organism>
    <name type="scientific">Rhizobium johnstonii (strain DSM 114642 / LMG 32736 / 3841)</name>
    <name type="common">Rhizobium leguminosarum bv. viciae</name>
    <dbReference type="NCBI Taxonomy" id="216596"/>
    <lineage>
        <taxon>Bacteria</taxon>
        <taxon>Pseudomonadati</taxon>
        <taxon>Pseudomonadota</taxon>
        <taxon>Alphaproteobacteria</taxon>
        <taxon>Hyphomicrobiales</taxon>
        <taxon>Rhizobiaceae</taxon>
        <taxon>Rhizobium/Agrobacterium group</taxon>
        <taxon>Rhizobium</taxon>
        <taxon>Rhizobium johnstonii</taxon>
    </lineage>
</organism>
<name>SYP_RHIJ3</name>
<protein>
    <recommendedName>
        <fullName evidence="1">Proline--tRNA ligase</fullName>
        <ecNumber evidence="1">6.1.1.15</ecNumber>
    </recommendedName>
    <alternativeName>
        <fullName evidence="1">Prolyl-tRNA synthetase</fullName>
        <shortName evidence="1">ProRS</shortName>
    </alternativeName>
</protein>
<gene>
    <name evidence="1" type="primary">proS</name>
    <name type="ordered locus">RL1719</name>
</gene>
<evidence type="ECO:0000255" key="1">
    <source>
        <dbReference type="HAMAP-Rule" id="MF_01570"/>
    </source>
</evidence>
<proteinExistence type="inferred from homology"/>
<reference key="1">
    <citation type="journal article" date="2006" name="Genome Biol.">
        <title>The genome of Rhizobium leguminosarum has recognizable core and accessory components.</title>
        <authorList>
            <person name="Young J.P.W."/>
            <person name="Crossman L.C."/>
            <person name="Johnston A.W.B."/>
            <person name="Thomson N.R."/>
            <person name="Ghazoui Z.F."/>
            <person name="Hull K.H."/>
            <person name="Wexler M."/>
            <person name="Curson A.R.J."/>
            <person name="Todd J.D."/>
            <person name="Poole P.S."/>
            <person name="Mauchline T.H."/>
            <person name="East A.K."/>
            <person name="Quail M.A."/>
            <person name="Churcher C."/>
            <person name="Arrowsmith C."/>
            <person name="Cherevach I."/>
            <person name="Chillingworth T."/>
            <person name="Clarke K."/>
            <person name="Cronin A."/>
            <person name="Davis P."/>
            <person name="Fraser A."/>
            <person name="Hance Z."/>
            <person name="Hauser H."/>
            <person name="Jagels K."/>
            <person name="Moule S."/>
            <person name="Mungall K."/>
            <person name="Norbertczak H."/>
            <person name="Rabbinowitsch E."/>
            <person name="Sanders M."/>
            <person name="Simmonds M."/>
            <person name="Whitehead S."/>
            <person name="Parkhill J."/>
        </authorList>
    </citation>
    <scope>NUCLEOTIDE SEQUENCE [LARGE SCALE GENOMIC DNA]</scope>
    <source>
        <strain>DSM 114642 / LMG 32736 / 3841</strain>
    </source>
</reference>
<feature type="chain" id="PRO_0000248907" description="Proline--tRNA ligase">
    <location>
        <begin position="1"/>
        <end position="440"/>
    </location>
</feature>
<sequence length="440" mass="49445">MRLSRFFMPILKENPKEAEIVSHRLMLRAGMIRQQSQGIYSWLPLGKRVLDKVNAIIRDEQNRAGAIELSMPTLQSAELWQESGRYDAYGKEMLRIKDRQDRPMLYGPTNEEMVTDIFRSSVKSYKDLPLNLYHIQLKFRDEIRPRFGTMRSREFMMKDAYSFDLTREAAEHSYNKMFAAYLRTFDRLGLRAIPMRADTGPIGGKLSHEFIILADTGESEVFCHKDFVDFDVPGEHTDFDSVEGLQAIFDKWTSLYAATSEMHDEAAFNAVPEGDRLSARGIEVGHIFYFGTKYSEPMGAKVQGPDGKEHFVHMGSYGIGPTRLVPAIIEASHDDNGIIWPASVAPFDIVVINMKAGDQACDDTCELIYAALSKAGKDVLYDDTDDRAGTKFATADLIGVPVQIIAGPRAVANGEVEVKDRKTGARETMTIEAAINRFVA</sequence>
<accession>Q1MIJ6</accession>
<comment type="function">
    <text evidence="1">Catalyzes the attachment of proline to tRNA(Pro) in a two-step reaction: proline is first activated by ATP to form Pro-AMP and then transferred to the acceptor end of tRNA(Pro).</text>
</comment>
<comment type="catalytic activity">
    <reaction evidence="1">
        <text>tRNA(Pro) + L-proline + ATP = L-prolyl-tRNA(Pro) + AMP + diphosphate</text>
        <dbReference type="Rhea" id="RHEA:14305"/>
        <dbReference type="Rhea" id="RHEA-COMP:9700"/>
        <dbReference type="Rhea" id="RHEA-COMP:9702"/>
        <dbReference type="ChEBI" id="CHEBI:30616"/>
        <dbReference type="ChEBI" id="CHEBI:33019"/>
        <dbReference type="ChEBI" id="CHEBI:60039"/>
        <dbReference type="ChEBI" id="CHEBI:78442"/>
        <dbReference type="ChEBI" id="CHEBI:78532"/>
        <dbReference type="ChEBI" id="CHEBI:456215"/>
        <dbReference type="EC" id="6.1.1.15"/>
    </reaction>
</comment>
<comment type="subunit">
    <text evidence="1">Homodimer.</text>
</comment>
<comment type="subcellular location">
    <subcellularLocation>
        <location evidence="1">Cytoplasm</location>
    </subcellularLocation>
</comment>
<comment type="similarity">
    <text evidence="1">Belongs to the class-II aminoacyl-tRNA synthetase family. ProS type 2 subfamily.</text>
</comment>